<organism>
    <name type="scientific">Crotalus atrox</name>
    <name type="common">Western diamondback rattlesnake</name>
    <dbReference type="NCBI Taxonomy" id="8730"/>
    <lineage>
        <taxon>Eukaryota</taxon>
        <taxon>Metazoa</taxon>
        <taxon>Chordata</taxon>
        <taxon>Craniata</taxon>
        <taxon>Vertebrata</taxon>
        <taxon>Euteleostomi</taxon>
        <taxon>Lepidosauria</taxon>
        <taxon>Squamata</taxon>
        <taxon>Bifurcata</taxon>
        <taxon>Unidentata</taxon>
        <taxon>Episquamata</taxon>
        <taxon>Toxicofera</taxon>
        <taxon>Serpentes</taxon>
        <taxon>Colubroidea</taxon>
        <taxon>Viperidae</taxon>
        <taxon>Crotalinae</taxon>
        <taxon>Crotalus</taxon>
    </lineage>
</organism>
<comment type="function">
    <text evidence="2 5 7">Catalyzes an oxidative deamination of predominantly hydrophobic and aromatic L-amino acids, thus producing hydrogen peroxide that may contribute to the diverse toxic effects of this enzyme (PubMed:10727211, PubMed:9083096). Shows activity on L-Leu (PubMed:10727211, PubMed:9083096). Exhibits diverse biological activities, such as hemolysis, edema, antibacterial and antiparasitic activities, as well as regulation of platelet aggregation. Effects of snake L-amino oxidases on platelets are controversial, since they either induce aggregation or inhibit agonist-induced aggregation. These different effects are probably due to different experimental conditions (By similarity). In addition, this protein induces hemorrhage and apoptosis.</text>
</comment>
<comment type="catalytic activity">
    <reaction evidence="5 7">
        <text>an L-alpha-amino acid + O2 + H2O = a 2-oxocarboxylate + H2O2 + NH4(+)</text>
        <dbReference type="Rhea" id="RHEA:13781"/>
        <dbReference type="ChEBI" id="CHEBI:15377"/>
        <dbReference type="ChEBI" id="CHEBI:15379"/>
        <dbReference type="ChEBI" id="CHEBI:16240"/>
        <dbReference type="ChEBI" id="CHEBI:28938"/>
        <dbReference type="ChEBI" id="CHEBI:35179"/>
        <dbReference type="ChEBI" id="CHEBI:59869"/>
        <dbReference type="EC" id="1.4.3.2"/>
    </reaction>
</comment>
<comment type="catalytic activity">
    <reaction evidence="5 7">
        <text>L-leucine + O2 + H2O = 4-methyl-2-oxopentanoate + H2O2 + NH4(+)</text>
        <dbReference type="Rhea" id="RHEA:60996"/>
        <dbReference type="ChEBI" id="CHEBI:15377"/>
        <dbReference type="ChEBI" id="CHEBI:15379"/>
        <dbReference type="ChEBI" id="CHEBI:16240"/>
        <dbReference type="ChEBI" id="CHEBI:17865"/>
        <dbReference type="ChEBI" id="CHEBI:28938"/>
        <dbReference type="ChEBI" id="CHEBI:57427"/>
    </reaction>
</comment>
<comment type="cofactor">
    <cofactor evidence="3">
        <name>FAD</name>
        <dbReference type="ChEBI" id="CHEBI:57692"/>
    </cofactor>
</comment>
<comment type="subunit">
    <text evidence="3">Homodimer; non-covalently linked.</text>
</comment>
<comment type="subcellular location">
    <subcellularLocation>
        <location evidence="7">Secreted</location>
    </subcellularLocation>
</comment>
<comment type="tissue specificity">
    <text evidence="11">Expressed by the venom gland.</text>
</comment>
<comment type="PTM">
    <text evidence="5">N-glycosylated. Glycosylation is needed for activity.</text>
</comment>
<comment type="similarity">
    <text evidence="10">Belongs to the flavin monoamine oxidase family. FIG1 subfamily.</text>
</comment>
<name>OXLA_CROAT</name>
<keyword id="KW-0044">Antibiotic</keyword>
<keyword id="KW-0929">Antimicrobial</keyword>
<keyword id="KW-0053">Apoptosis</keyword>
<keyword id="KW-0204">Cytolysis</keyword>
<keyword id="KW-0903">Direct protein sequencing</keyword>
<keyword id="KW-1015">Disulfide bond</keyword>
<keyword id="KW-0274">FAD</keyword>
<keyword id="KW-0285">Flavoprotein</keyword>
<keyword id="KW-0325">Glycoprotein</keyword>
<keyword id="KW-0354">Hemolysis</keyword>
<keyword id="KW-1200">Hemorrhagic toxin</keyword>
<keyword id="KW-1199">Hemostasis impairing toxin</keyword>
<keyword id="KW-0560">Oxidoreductase</keyword>
<keyword id="KW-0964">Secreted</keyword>
<keyword id="KW-0732">Signal</keyword>
<keyword id="KW-0800">Toxin</keyword>
<sequence>MNVFFMFSLLFLAALGSCAHDRNPLEECFRETDYEEFLEIAKNGLTATSNPKRVVIVGAGMAGLSAAYVLAGAGHQVTVLEASERVGGRVRTYRKKDWYANLGPMRLPTKHRIVREYIKKFDLKLNEFSQENENAWYFIKNIRKRVREVKNNPGLLEYPVKPSEEGKSAAQLYVESLRKVVKELKRTNCKYILDKYDTYSTKEYLLKEGNLSPGAVDMIGDLLNEDSGYYVSFIESLKHDDIFGYEKRFDEIVGGMDQLPTSMYEAIKEKVQVHFNARVIEIQQNDREATVTYQTSANEMSSVTADYVIVCTTSRAARRIKFEPPLPPKKAHALRSVHYRSGTKIFLTCKKKFWEDDGIRGGKSTTDLPSRFIYYPNHNFTSGVGVIIAYGIGDDANFFQALDFKDCADIVINDLSLIHQLPKEDIQTFCRPSMIQRWSLDKYAMGGITTFTPYQFQHFSEALTAPFKRIYFAGEYTAQFHGWIDSTIKSGLTAARDVNRASENPSGIHLSNDNEF</sequence>
<evidence type="ECO:0000250" key="1"/>
<evidence type="ECO:0000250" key="2">
    <source>
        <dbReference type="UniProtKB" id="P0CC17"/>
    </source>
</evidence>
<evidence type="ECO:0000250" key="3">
    <source>
        <dbReference type="UniProtKB" id="P81382"/>
    </source>
</evidence>
<evidence type="ECO:0000255" key="4"/>
<evidence type="ECO:0000269" key="5">
    <source>
    </source>
</evidence>
<evidence type="ECO:0000269" key="6">
    <source>
    </source>
</evidence>
<evidence type="ECO:0000269" key="7">
    <source>
    </source>
</evidence>
<evidence type="ECO:0000303" key="8">
    <source>
    </source>
</evidence>
<evidence type="ECO:0000303" key="9">
    <source>
    </source>
</evidence>
<evidence type="ECO:0000305" key="10"/>
<evidence type="ECO:0000305" key="11">
    <source>
    </source>
</evidence>
<feature type="signal peptide" evidence="5 6 7">
    <location>
        <begin position="1"/>
        <end position="18"/>
    </location>
</feature>
<feature type="chain" id="PRO_0000099870" description="L-amino-acid oxidase apoxin-1">
    <location>
        <begin position="19"/>
        <end position="516"/>
    </location>
</feature>
<feature type="binding site" evidence="3">
    <location>
        <begin position="61"/>
        <end position="62"/>
    </location>
    <ligand>
        <name>FAD</name>
        <dbReference type="ChEBI" id="CHEBI:57692"/>
    </ligand>
</feature>
<feature type="binding site" evidence="3">
    <location>
        <begin position="81"/>
        <end position="82"/>
    </location>
    <ligand>
        <name>FAD</name>
        <dbReference type="ChEBI" id="CHEBI:57692"/>
    </ligand>
</feature>
<feature type="binding site" evidence="3">
    <location>
        <position position="89"/>
    </location>
    <ligand>
        <name>FAD</name>
        <dbReference type="ChEBI" id="CHEBI:57692"/>
    </ligand>
</feature>
<feature type="binding site" evidence="3">
    <location>
        <begin position="103"/>
        <end position="106"/>
    </location>
    <ligand>
        <name>FAD</name>
        <dbReference type="ChEBI" id="CHEBI:57692"/>
    </ligand>
</feature>
<feature type="binding site" evidence="3">
    <location>
        <position position="106"/>
    </location>
    <ligand>
        <name>substrate</name>
    </ligand>
</feature>
<feature type="binding site" evidence="3">
    <location>
        <position position="239"/>
    </location>
    <ligand>
        <name>substrate</name>
    </ligand>
</feature>
<feature type="binding site" evidence="1">
    <location>
        <position position="279"/>
    </location>
    <ligand>
        <name>FAD</name>
        <dbReference type="ChEBI" id="CHEBI:57692"/>
    </ligand>
</feature>
<feature type="binding site" evidence="3">
    <location>
        <position position="390"/>
    </location>
    <ligand>
        <name>substrate</name>
    </ligand>
</feature>
<feature type="binding site" evidence="3">
    <location>
        <position position="475"/>
    </location>
    <ligand>
        <name>FAD</name>
        <dbReference type="ChEBI" id="CHEBI:57692"/>
    </ligand>
</feature>
<feature type="binding site" evidence="3">
    <location>
        <begin position="482"/>
        <end position="487"/>
    </location>
    <ligand>
        <name>FAD</name>
        <dbReference type="ChEBI" id="CHEBI:57692"/>
    </ligand>
</feature>
<feature type="binding site" evidence="3">
    <location>
        <begin position="482"/>
        <end position="483"/>
    </location>
    <ligand>
        <name>substrate</name>
    </ligand>
</feature>
<feature type="glycosylation site" description="N-linked (GlcNAc...) asparagine" evidence="4">
    <location>
        <position position="379"/>
    </location>
</feature>
<feature type="disulfide bond" evidence="3">
    <location>
        <begin position="28"/>
        <end position="189"/>
    </location>
</feature>
<feature type="disulfide bond" evidence="3">
    <location>
        <begin position="349"/>
        <end position="430"/>
    </location>
</feature>
<dbReference type="EC" id="1.4.3.2" evidence="5 7"/>
<dbReference type="EMBL" id="AF093248">
    <property type="protein sequence ID" value="AAD45200.1"/>
    <property type="molecule type" value="mRNA"/>
</dbReference>
<dbReference type="SMR" id="P56742"/>
<dbReference type="STRENDA-DB" id="KTRCXF">
    <property type="experiment" value="Kinetics of L-AAO from Crotalus atrox"/>
</dbReference>
<dbReference type="GO" id="GO:0005576">
    <property type="term" value="C:extracellular region"/>
    <property type="evidence" value="ECO:0000314"/>
    <property type="project" value="UniProtKB"/>
</dbReference>
<dbReference type="GO" id="GO:0001716">
    <property type="term" value="F:L-amino-acid oxidase activity"/>
    <property type="evidence" value="ECO:0000314"/>
    <property type="project" value="UniProtKB"/>
</dbReference>
<dbReference type="GO" id="GO:0090729">
    <property type="term" value="F:toxin activity"/>
    <property type="evidence" value="ECO:0007669"/>
    <property type="project" value="UniProtKB-KW"/>
</dbReference>
<dbReference type="GO" id="GO:0009063">
    <property type="term" value="P:amino acid catabolic process"/>
    <property type="evidence" value="ECO:0007669"/>
    <property type="project" value="TreeGrafter"/>
</dbReference>
<dbReference type="GO" id="GO:0006915">
    <property type="term" value="P:apoptotic process"/>
    <property type="evidence" value="ECO:0007669"/>
    <property type="project" value="UniProtKB-KW"/>
</dbReference>
<dbReference type="GO" id="GO:0042742">
    <property type="term" value="P:defense response to bacterium"/>
    <property type="evidence" value="ECO:0007669"/>
    <property type="project" value="UniProtKB-KW"/>
</dbReference>
<dbReference type="GO" id="GO:0031640">
    <property type="term" value="P:killing of cells of another organism"/>
    <property type="evidence" value="ECO:0007669"/>
    <property type="project" value="UniProtKB-KW"/>
</dbReference>
<dbReference type="FunFam" id="1.10.405.10:FF:000004">
    <property type="entry name" value="Amine oxidase"/>
    <property type="match status" value="1"/>
</dbReference>
<dbReference type="FunFam" id="3.50.50.60:FF:000450">
    <property type="entry name" value="Amine oxidase"/>
    <property type="match status" value="1"/>
</dbReference>
<dbReference type="Gene3D" id="3.90.660.10">
    <property type="match status" value="1"/>
</dbReference>
<dbReference type="Gene3D" id="3.50.50.60">
    <property type="entry name" value="FAD/NAD(P)-binding domain"/>
    <property type="match status" value="1"/>
</dbReference>
<dbReference type="Gene3D" id="1.10.405.10">
    <property type="entry name" value="Guanine Nucleotide Dissociation Inhibitor, domain 1"/>
    <property type="match status" value="1"/>
</dbReference>
<dbReference type="InterPro" id="IPR002937">
    <property type="entry name" value="Amino_oxidase"/>
</dbReference>
<dbReference type="InterPro" id="IPR036188">
    <property type="entry name" value="FAD/NAD-bd_sf"/>
</dbReference>
<dbReference type="InterPro" id="IPR050281">
    <property type="entry name" value="Flavin_monoamine_oxidase"/>
</dbReference>
<dbReference type="PANTHER" id="PTHR10742:SF355">
    <property type="entry name" value="AMINE OXIDASE"/>
    <property type="match status" value="1"/>
</dbReference>
<dbReference type="PANTHER" id="PTHR10742">
    <property type="entry name" value="FLAVIN MONOAMINE OXIDASE"/>
    <property type="match status" value="1"/>
</dbReference>
<dbReference type="Pfam" id="PF01593">
    <property type="entry name" value="Amino_oxidase"/>
    <property type="match status" value="1"/>
</dbReference>
<dbReference type="SUPFAM" id="SSF54373">
    <property type="entry name" value="FAD-linked reductases, C-terminal domain"/>
    <property type="match status" value="1"/>
</dbReference>
<dbReference type="SUPFAM" id="SSF51905">
    <property type="entry name" value="FAD/NAD(P)-binding domain"/>
    <property type="match status" value="1"/>
</dbReference>
<reference key="1">
    <citation type="journal article" date="2000" name="Biochemistry">
        <title>Molecular cloning and functional analysis of apoxin I, a snake venom-derived apoptosis-inducing factor with L-amino acid oxidase activity.</title>
        <authorList>
            <person name="Torii S."/>
            <person name="Yamane K."/>
            <person name="Mashima T."/>
            <person name="Haga N."/>
            <person name="Yamamoto K."/>
            <person name="Fox J.W."/>
            <person name="Naito M."/>
            <person name="Tsuruo T."/>
        </authorList>
    </citation>
    <scope>NUCLEOTIDE SEQUENCE [MRNA]</scope>
    <scope>PROTEIN SEQUENCE OF 19-38; 97-109; 126-138; 240-247 AND 491-505</scope>
    <scope>CATALYTIC ACTIVITY</scope>
    <scope>GLYCOSYLATION</scope>
    <source>
        <tissue>Venom</tissue>
        <tissue>Venom gland</tissue>
    </source>
</reference>
<reference key="2">
    <citation type="journal article" date="1997" name="J. Biol. Chem.">
        <title>Apoxin I, a novel apoptosis-inducing factor with L-amino acid oxidase activity purified from Western diamondback rattlesnake venom.</title>
        <authorList>
            <person name="Torii S."/>
            <person name="Naito M."/>
            <person name="Tsuruo T."/>
        </authorList>
    </citation>
    <scope>PROTEIN SEQUENCE OF 19-38</scope>
    <scope>FUNCTION</scope>
    <scope>CATALYTIC ACTIVITY</scope>
    <scope>SUBCELLULAR LOCATION</scope>
    <source>
        <tissue>Venom</tissue>
    </source>
</reference>
<reference key="3">
    <citation type="journal article" date="2009" name="J. Proteome Res.">
        <title>Exploring the venom proteome of the western diamondback rattlesnake, Crotalus atrox, via snake venomics and combinatorial peptide ligand library approaches.</title>
        <authorList>
            <person name="Calvete J.J."/>
            <person name="Fasoli E."/>
            <person name="Sanz L."/>
            <person name="Boschetti E."/>
            <person name="Righetti P.G."/>
        </authorList>
    </citation>
    <scope>PROTEIN SEQUENCE OF 19-33</scope>
    <scope>IDENTIFICATION BY MASS SPECTROMETRY</scope>
    <source>
        <tissue>Venom</tissue>
    </source>
</reference>
<proteinExistence type="evidence at protein level"/>
<protein>
    <recommendedName>
        <fullName evidence="10">L-amino-acid oxidase apoxin-1</fullName>
        <shortName>LAAO</shortName>
        <shortName evidence="8 9">LAO</shortName>
        <ecNumber evidence="5 7">1.4.3.2</ecNumber>
    </recommendedName>
    <alternativeName>
        <fullName evidence="8 9">Apoxin I</fullName>
    </alternativeName>
</protein>
<accession>P56742</accession>
<accession>Q9PWC9</accession>